<proteinExistence type="inferred from homology"/>
<comment type="catalytic activity">
    <reaction evidence="1">
        <text>tRNA(Arg) + L-arginine + ATP = L-arginyl-tRNA(Arg) + AMP + diphosphate</text>
        <dbReference type="Rhea" id="RHEA:20301"/>
        <dbReference type="Rhea" id="RHEA-COMP:9658"/>
        <dbReference type="Rhea" id="RHEA-COMP:9673"/>
        <dbReference type="ChEBI" id="CHEBI:30616"/>
        <dbReference type="ChEBI" id="CHEBI:32682"/>
        <dbReference type="ChEBI" id="CHEBI:33019"/>
        <dbReference type="ChEBI" id="CHEBI:78442"/>
        <dbReference type="ChEBI" id="CHEBI:78513"/>
        <dbReference type="ChEBI" id="CHEBI:456215"/>
        <dbReference type="EC" id="6.1.1.19"/>
    </reaction>
</comment>
<comment type="subunit">
    <text evidence="1">Monomer.</text>
</comment>
<comment type="subcellular location">
    <subcellularLocation>
        <location evidence="1">Cytoplasm</location>
    </subcellularLocation>
</comment>
<comment type="similarity">
    <text evidence="1">Belongs to the class-I aminoacyl-tRNA synthetase family.</text>
</comment>
<sequence length="550" mass="59204">MTPADLAQLLKATAAAVLAEHGLDSAALPDTVTVERPRNPEHGDYATNLALQLGKKVGANPRELAGWLAEALAASDGIAAADVAGPGFVNLRIEASAQNVMVSNVLSAGADYGHSAVLAGKKVNLEFVSANPTGPIHIGGTRWAAVGDALGRLLTTQGAAVTREYYFNDHGAQIDRFSNSLIAAAKGEPAPEDGYAGTYIADIASQVVAKEPGVLDQPDDRMRETFRAIGVNLMFDHIKESLHEFGTDFDVYTHEDSMHTSGRVEQAIDKLRETGFAYEKDGAVWLRTTDFGDDKDRVVIKSDGKPAYIAGDLAYFLDKRKRGFDLCIYMLGADHHGYIARLKASAAALGDDPDTVEVLIGQMVNLVRDGQPVRMSKRAGTVITLDDLVEAIGVDAARYSLIRSSVDTPIDIDLELWSSASNENPVYYVQYAHARLSALARNAAELGIAPDTAHLDLLTHDKEGVLIRNIGEFPRILATAAELREPHRVSRYLEDLAGDYHRFYDACRVLPQGDEAPGDLHAARLALCAATRQVIANGLDILGVSAPERM</sequence>
<reference key="1">
    <citation type="submission" date="2007-04" db="EMBL/GenBank/DDBJ databases">
        <title>Complete sequence of chromosome of Mycobacterium gilvum PYR-GCK.</title>
        <authorList>
            <consortium name="US DOE Joint Genome Institute"/>
            <person name="Copeland A."/>
            <person name="Lucas S."/>
            <person name="Lapidus A."/>
            <person name="Barry K."/>
            <person name="Detter J.C."/>
            <person name="Glavina del Rio T."/>
            <person name="Hammon N."/>
            <person name="Israni S."/>
            <person name="Dalin E."/>
            <person name="Tice H."/>
            <person name="Pitluck S."/>
            <person name="Chain P."/>
            <person name="Malfatti S."/>
            <person name="Shin M."/>
            <person name="Vergez L."/>
            <person name="Schmutz J."/>
            <person name="Larimer F."/>
            <person name="Land M."/>
            <person name="Hauser L."/>
            <person name="Kyrpides N."/>
            <person name="Mikhailova N."/>
            <person name="Miller C."/>
            <person name="Richardson P."/>
        </authorList>
    </citation>
    <scope>NUCLEOTIDE SEQUENCE [LARGE SCALE GENOMIC DNA]</scope>
    <source>
        <strain>PYR-GCK</strain>
    </source>
</reference>
<gene>
    <name evidence="1" type="primary">argS</name>
    <name type="ordered locus">Mflv_2296</name>
</gene>
<accession>A4T8M4</accession>
<evidence type="ECO:0000255" key="1">
    <source>
        <dbReference type="HAMAP-Rule" id="MF_00123"/>
    </source>
</evidence>
<dbReference type="EC" id="6.1.1.19" evidence="1"/>
<dbReference type="EMBL" id="CP000656">
    <property type="protein sequence ID" value="ABP44774.1"/>
    <property type="molecule type" value="Genomic_DNA"/>
</dbReference>
<dbReference type="SMR" id="A4T8M4"/>
<dbReference type="STRING" id="350054.Mflv_2296"/>
<dbReference type="KEGG" id="mgi:Mflv_2296"/>
<dbReference type="eggNOG" id="COG0018">
    <property type="taxonomic scope" value="Bacteria"/>
</dbReference>
<dbReference type="HOGENOM" id="CLU_006406_0_1_11"/>
<dbReference type="OrthoDB" id="9803211at2"/>
<dbReference type="GO" id="GO:0005737">
    <property type="term" value="C:cytoplasm"/>
    <property type="evidence" value="ECO:0007669"/>
    <property type="project" value="UniProtKB-SubCell"/>
</dbReference>
<dbReference type="GO" id="GO:0004814">
    <property type="term" value="F:arginine-tRNA ligase activity"/>
    <property type="evidence" value="ECO:0007669"/>
    <property type="project" value="UniProtKB-UniRule"/>
</dbReference>
<dbReference type="GO" id="GO:0005524">
    <property type="term" value="F:ATP binding"/>
    <property type="evidence" value="ECO:0007669"/>
    <property type="project" value="UniProtKB-UniRule"/>
</dbReference>
<dbReference type="GO" id="GO:0006420">
    <property type="term" value="P:arginyl-tRNA aminoacylation"/>
    <property type="evidence" value="ECO:0007669"/>
    <property type="project" value="UniProtKB-UniRule"/>
</dbReference>
<dbReference type="CDD" id="cd07956">
    <property type="entry name" value="Anticodon_Ia_Arg"/>
    <property type="match status" value="1"/>
</dbReference>
<dbReference type="CDD" id="cd00671">
    <property type="entry name" value="ArgRS_core"/>
    <property type="match status" value="1"/>
</dbReference>
<dbReference type="FunFam" id="1.10.730.10:FF:000008">
    <property type="entry name" value="Arginine--tRNA ligase"/>
    <property type="match status" value="1"/>
</dbReference>
<dbReference type="FunFam" id="3.30.1360.70:FF:000003">
    <property type="entry name" value="Arginine--tRNA ligase"/>
    <property type="match status" value="1"/>
</dbReference>
<dbReference type="FunFam" id="3.40.50.620:FF:000062">
    <property type="entry name" value="Arginine--tRNA ligase"/>
    <property type="match status" value="1"/>
</dbReference>
<dbReference type="Gene3D" id="3.30.1360.70">
    <property type="entry name" value="Arginyl tRNA synthetase N-terminal domain"/>
    <property type="match status" value="1"/>
</dbReference>
<dbReference type="Gene3D" id="3.40.50.620">
    <property type="entry name" value="HUPs"/>
    <property type="match status" value="1"/>
</dbReference>
<dbReference type="Gene3D" id="1.10.730.10">
    <property type="entry name" value="Isoleucyl-tRNA Synthetase, Domain 1"/>
    <property type="match status" value="1"/>
</dbReference>
<dbReference type="HAMAP" id="MF_00123">
    <property type="entry name" value="Arg_tRNA_synth"/>
    <property type="match status" value="1"/>
</dbReference>
<dbReference type="InterPro" id="IPR001412">
    <property type="entry name" value="aa-tRNA-synth_I_CS"/>
</dbReference>
<dbReference type="InterPro" id="IPR001278">
    <property type="entry name" value="Arg-tRNA-ligase"/>
</dbReference>
<dbReference type="InterPro" id="IPR005148">
    <property type="entry name" value="Arg-tRNA-synth_N"/>
</dbReference>
<dbReference type="InterPro" id="IPR036695">
    <property type="entry name" value="Arg-tRNA-synth_N_sf"/>
</dbReference>
<dbReference type="InterPro" id="IPR035684">
    <property type="entry name" value="ArgRS_core"/>
</dbReference>
<dbReference type="InterPro" id="IPR008909">
    <property type="entry name" value="DALR_anticod-bd"/>
</dbReference>
<dbReference type="InterPro" id="IPR014729">
    <property type="entry name" value="Rossmann-like_a/b/a_fold"/>
</dbReference>
<dbReference type="InterPro" id="IPR009080">
    <property type="entry name" value="tRNAsynth_Ia_anticodon-bd"/>
</dbReference>
<dbReference type="NCBIfam" id="TIGR00456">
    <property type="entry name" value="argS"/>
    <property type="match status" value="1"/>
</dbReference>
<dbReference type="PANTHER" id="PTHR11956:SF5">
    <property type="entry name" value="ARGININE--TRNA LIGASE, CYTOPLASMIC"/>
    <property type="match status" value="1"/>
</dbReference>
<dbReference type="PANTHER" id="PTHR11956">
    <property type="entry name" value="ARGINYL-TRNA SYNTHETASE"/>
    <property type="match status" value="1"/>
</dbReference>
<dbReference type="Pfam" id="PF03485">
    <property type="entry name" value="Arg_tRNA_synt_N"/>
    <property type="match status" value="1"/>
</dbReference>
<dbReference type="Pfam" id="PF05746">
    <property type="entry name" value="DALR_1"/>
    <property type="match status" value="1"/>
</dbReference>
<dbReference type="Pfam" id="PF00750">
    <property type="entry name" value="tRNA-synt_1d"/>
    <property type="match status" value="2"/>
</dbReference>
<dbReference type="PRINTS" id="PR01038">
    <property type="entry name" value="TRNASYNTHARG"/>
</dbReference>
<dbReference type="SMART" id="SM01016">
    <property type="entry name" value="Arg_tRNA_synt_N"/>
    <property type="match status" value="1"/>
</dbReference>
<dbReference type="SMART" id="SM00836">
    <property type="entry name" value="DALR_1"/>
    <property type="match status" value="1"/>
</dbReference>
<dbReference type="SUPFAM" id="SSF47323">
    <property type="entry name" value="Anticodon-binding domain of a subclass of class I aminoacyl-tRNA synthetases"/>
    <property type="match status" value="1"/>
</dbReference>
<dbReference type="SUPFAM" id="SSF55190">
    <property type="entry name" value="Arginyl-tRNA synthetase (ArgRS), N-terminal 'additional' domain"/>
    <property type="match status" value="1"/>
</dbReference>
<dbReference type="SUPFAM" id="SSF52374">
    <property type="entry name" value="Nucleotidylyl transferase"/>
    <property type="match status" value="1"/>
</dbReference>
<dbReference type="PROSITE" id="PS00178">
    <property type="entry name" value="AA_TRNA_LIGASE_I"/>
    <property type="match status" value="1"/>
</dbReference>
<name>SYR_MYCGI</name>
<keyword id="KW-0030">Aminoacyl-tRNA synthetase</keyword>
<keyword id="KW-0067">ATP-binding</keyword>
<keyword id="KW-0963">Cytoplasm</keyword>
<keyword id="KW-0436">Ligase</keyword>
<keyword id="KW-0547">Nucleotide-binding</keyword>
<keyword id="KW-0648">Protein biosynthesis</keyword>
<protein>
    <recommendedName>
        <fullName evidence="1">Arginine--tRNA ligase</fullName>
        <ecNumber evidence="1">6.1.1.19</ecNumber>
    </recommendedName>
    <alternativeName>
        <fullName evidence="1">Arginyl-tRNA synthetase</fullName>
        <shortName evidence="1">ArgRS</shortName>
    </alternativeName>
</protein>
<organism>
    <name type="scientific">Mycolicibacterium gilvum (strain PYR-GCK)</name>
    <name type="common">Mycobacterium gilvum (strain PYR-GCK)</name>
    <dbReference type="NCBI Taxonomy" id="350054"/>
    <lineage>
        <taxon>Bacteria</taxon>
        <taxon>Bacillati</taxon>
        <taxon>Actinomycetota</taxon>
        <taxon>Actinomycetes</taxon>
        <taxon>Mycobacteriales</taxon>
        <taxon>Mycobacteriaceae</taxon>
        <taxon>Mycolicibacterium</taxon>
    </lineage>
</organism>
<feature type="chain" id="PRO_1000076222" description="Arginine--tRNA ligase">
    <location>
        <begin position="1"/>
        <end position="550"/>
    </location>
</feature>
<feature type="short sequence motif" description="'HIGH' region">
    <location>
        <begin position="130"/>
        <end position="140"/>
    </location>
</feature>